<gene>
    <name evidence="1" type="primary">rhaS</name>
    <name type="ordered locus">SPAB_05015</name>
</gene>
<sequence>MTVLHSVDFFPSGKAPVAIEPRLPQAAFPEHHHDFHEIVIVEHGTGIHVFNGQPYTISGGTVCFVRDHDRHLYEHTDNLCLTNVLWRSPDAFQFLAGLDQLLPQEQDGYYPSHWRVNQSVLQQVRQLVGLMERAGDGMDAPAVANREILFMQLLVLLRRSSLMEGATNNDAKLNQLMAWLEDHFAEEVCWEAVAEQFSLSLRTLHRQLKQHTGLTPQRYLNRLRLIKARHLLRHSDHSVTEIAYRCGFGDSNHFSTLFRREFNWSPRDIRQGRDAIIQ</sequence>
<reference key="1">
    <citation type="submission" date="2007-11" db="EMBL/GenBank/DDBJ databases">
        <authorList>
            <consortium name="The Salmonella enterica serovar Paratyphi B Genome Sequencing Project"/>
            <person name="McClelland M."/>
            <person name="Sanderson E.K."/>
            <person name="Porwollik S."/>
            <person name="Spieth J."/>
            <person name="Clifton W.S."/>
            <person name="Fulton R."/>
            <person name="Cordes M."/>
            <person name="Wollam A."/>
            <person name="Shah N."/>
            <person name="Pepin K."/>
            <person name="Bhonagiri V."/>
            <person name="Nash W."/>
            <person name="Johnson M."/>
            <person name="Thiruvilangam P."/>
            <person name="Wilson R."/>
        </authorList>
    </citation>
    <scope>NUCLEOTIDE SEQUENCE [LARGE SCALE GENOMIC DNA]</scope>
    <source>
        <strain>ATCC BAA-1250 / SPB7</strain>
    </source>
</reference>
<feature type="chain" id="PRO_1000087600" description="HTH-type transcriptional activator RhaS">
    <location>
        <begin position="1"/>
        <end position="278"/>
    </location>
</feature>
<feature type="domain" description="HTH araC/xylS-type" evidence="1">
    <location>
        <begin position="174"/>
        <end position="272"/>
    </location>
</feature>
<feature type="DNA-binding region" description="H-T-H motif" evidence="1">
    <location>
        <begin position="191"/>
        <end position="212"/>
    </location>
</feature>
<feature type="DNA-binding region" description="H-T-H motif" evidence="1">
    <location>
        <begin position="239"/>
        <end position="262"/>
    </location>
</feature>
<feature type="site" description="Interaction with sigma-70" evidence="1">
    <location>
        <position position="241"/>
    </location>
</feature>
<feature type="site" description="Interaction with sigma-70" evidence="1">
    <location>
        <position position="250"/>
    </location>
</feature>
<evidence type="ECO:0000255" key="1">
    <source>
        <dbReference type="HAMAP-Rule" id="MF_01534"/>
    </source>
</evidence>
<name>RHAS_SALPB</name>
<comment type="function">
    <text evidence="1">Activates expression of the rhaBAD and rhaT operons.</text>
</comment>
<comment type="subunit">
    <text evidence="1">Binds DNA as a dimer.</text>
</comment>
<comment type="subcellular location">
    <subcellularLocation>
        <location evidence="1">Cytoplasm</location>
    </subcellularLocation>
</comment>
<keyword id="KW-0010">Activator</keyword>
<keyword id="KW-0963">Cytoplasm</keyword>
<keyword id="KW-0238">DNA-binding</keyword>
<keyword id="KW-0677">Repeat</keyword>
<keyword id="KW-0684">Rhamnose metabolism</keyword>
<keyword id="KW-0804">Transcription</keyword>
<keyword id="KW-0805">Transcription regulation</keyword>
<protein>
    <recommendedName>
        <fullName evidence="1">HTH-type transcriptional activator RhaS</fullName>
    </recommendedName>
    <alternativeName>
        <fullName evidence="1">L-rhamnose operon regulatory protein RhaS</fullName>
    </alternativeName>
</protein>
<accession>A9MZC8</accession>
<organism>
    <name type="scientific">Salmonella paratyphi B (strain ATCC BAA-1250 / SPB7)</name>
    <dbReference type="NCBI Taxonomy" id="1016998"/>
    <lineage>
        <taxon>Bacteria</taxon>
        <taxon>Pseudomonadati</taxon>
        <taxon>Pseudomonadota</taxon>
        <taxon>Gammaproteobacteria</taxon>
        <taxon>Enterobacterales</taxon>
        <taxon>Enterobacteriaceae</taxon>
        <taxon>Salmonella</taxon>
    </lineage>
</organism>
<proteinExistence type="inferred from homology"/>
<dbReference type="EMBL" id="CP000886">
    <property type="protein sequence ID" value="ABX70306.1"/>
    <property type="molecule type" value="Genomic_DNA"/>
</dbReference>
<dbReference type="RefSeq" id="WP_000217112.1">
    <property type="nucleotide sequence ID" value="NC_010102.1"/>
</dbReference>
<dbReference type="SMR" id="A9MZC8"/>
<dbReference type="KEGG" id="spq:SPAB_05015"/>
<dbReference type="PATRIC" id="fig|1016998.12.peg.4707"/>
<dbReference type="HOGENOM" id="CLU_000445_88_5_6"/>
<dbReference type="BioCyc" id="SENT1016998:SPAB_RS20405-MONOMER"/>
<dbReference type="Proteomes" id="UP000008556">
    <property type="component" value="Chromosome"/>
</dbReference>
<dbReference type="GO" id="GO:0005737">
    <property type="term" value="C:cytoplasm"/>
    <property type="evidence" value="ECO:0007669"/>
    <property type="project" value="UniProtKB-SubCell"/>
</dbReference>
<dbReference type="GO" id="GO:0003700">
    <property type="term" value="F:DNA-binding transcription factor activity"/>
    <property type="evidence" value="ECO:0007669"/>
    <property type="project" value="UniProtKB-UniRule"/>
</dbReference>
<dbReference type="GO" id="GO:0043565">
    <property type="term" value="F:sequence-specific DNA binding"/>
    <property type="evidence" value="ECO:0007669"/>
    <property type="project" value="InterPro"/>
</dbReference>
<dbReference type="GO" id="GO:0045893">
    <property type="term" value="P:positive regulation of DNA-templated transcription"/>
    <property type="evidence" value="ECO:0007669"/>
    <property type="project" value="UniProtKB-UniRule"/>
</dbReference>
<dbReference type="GO" id="GO:0019299">
    <property type="term" value="P:rhamnose metabolic process"/>
    <property type="evidence" value="ECO:0007669"/>
    <property type="project" value="UniProtKB-UniRule"/>
</dbReference>
<dbReference type="CDD" id="cd06977">
    <property type="entry name" value="cupin_RhaR_RhaS-like_N"/>
    <property type="match status" value="1"/>
</dbReference>
<dbReference type="Gene3D" id="1.10.10.60">
    <property type="entry name" value="Homeodomain-like"/>
    <property type="match status" value="1"/>
</dbReference>
<dbReference type="Gene3D" id="2.60.120.10">
    <property type="entry name" value="Jelly Rolls"/>
    <property type="match status" value="1"/>
</dbReference>
<dbReference type="HAMAP" id="MF_01534">
    <property type="entry name" value="HTH_type_RhaS"/>
    <property type="match status" value="1"/>
</dbReference>
<dbReference type="InterPro" id="IPR003313">
    <property type="entry name" value="AraC-bd"/>
</dbReference>
<dbReference type="InterPro" id="IPR050204">
    <property type="entry name" value="AraC_XylS_family_regulators"/>
</dbReference>
<dbReference type="InterPro" id="IPR009057">
    <property type="entry name" value="Homeodomain-like_sf"/>
</dbReference>
<dbReference type="InterPro" id="IPR037923">
    <property type="entry name" value="HTH-like"/>
</dbReference>
<dbReference type="InterPro" id="IPR018060">
    <property type="entry name" value="HTH_AraC"/>
</dbReference>
<dbReference type="InterPro" id="IPR018062">
    <property type="entry name" value="HTH_AraC-typ_CS"/>
</dbReference>
<dbReference type="InterPro" id="IPR047220">
    <property type="entry name" value="RhaR_RhaS-like_N"/>
</dbReference>
<dbReference type="InterPro" id="IPR014710">
    <property type="entry name" value="RmlC-like_jellyroll"/>
</dbReference>
<dbReference type="InterPro" id="IPR020449">
    <property type="entry name" value="Tscrpt_reg_AraC-type_HTH"/>
</dbReference>
<dbReference type="InterPro" id="IPR023609">
    <property type="entry name" value="Tscrpt_reg_HTH_RhaS"/>
</dbReference>
<dbReference type="NCBIfam" id="NF010028">
    <property type="entry name" value="PRK13503.1"/>
    <property type="match status" value="1"/>
</dbReference>
<dbReference type="PANTHER" id="PTHR46796:SF13">
    <property type="entry name" value="HTH-TYPE TRANSCRIPTIONAL ACTIVATOR RHAS"/>
    <property type="match status" value="1"/>
</dbReference>
<dbReference type="PANTHER" id="PTHR46796">
    <property type="entry name" value="HTH-TYPE TRANSCRIPTIONAL ACTIVATOR RHAS-RELATED"/>
    <property type="match status" value="1"/>
</dbReference>
<dbReference type="Pfam" id="PF02311">
    <property type="entry name" value="AraC_binding"/>
    <property type="match status" value="1"/>
</dbReference>
<dbReference type="Pfam" id="PF12833">
    <property type="entry name" value="HTH_18"/>
    <property type="match status" value="1"/>
</dbReference>
<dbReference type="PRINTS" id="PR00032">
    <property type="entry name" value="HTHARAC"/>
</dbReference>
<dbReference type="SMART" id="SM00342">
    <property type="entry name" value="HTH_ARAC"/>
    <property type="match status" value="1"/>
</dbReference>
<dbReference type="SUPFAM" id="SSF46689">
    <property type="entry name" value="Homeodomain-like"/>
    <property type="match status" value="2"/>
</dbReference>
<dbReference type="SUPFAM" id="SSF51215">
    <property type="entry name" value="Regulatory protein AraC"/>
    <property type="match status" value="1"/>
</dbReference>
<dbReference type="PROSITE" id="PS00041">
    <property type="entry name" value="HTH_ARAC_FAMILY_1"/>
    <property type="match status" value="1"/>
</dbReference>
<dbReference type="PROSITE" id="PS01124">
    <property type="entry name" value="HTH_ARAC_FAMILY_2"/>
    <property type="match status" value="1"/>
</dbReference>